<sequence length="1317" mass="146513">MLDVNFFDELRIGLATADDIRNWSYGEVKKPETINYRTLKPEKDGLFCEKIFGPTRDWECYCGKYKRVRFKGIICERCGVEVTRAKVRRERMGHIELAAPVTHIWYFKGVPSRLGYLLDLAPKDLEKIIYFAAYVITSVDDEMRHNELSTLEAEMAVEKKAVEDQRDADLEARAQKLEADLAELEAEGAKSDVRRKVRDSGEREMRQLRDRAQRELDRLDEIWNTFTKLAPKQLIVDEVLYRELQDRYGEYFTGAMGAESIKKLIENFDIDAEAESLREVIRSGKGQKKLRALKRLKVVAAFQQSGNSPMGMVLDAVPVIPPELRPMVQLDGGRFATSDLNDLYRRVINRNNRLKRLIDLGAPEIIVNNEKRMLQESVDALFDNGRRGRPVTGPGNRPLKSLSDLLKGKQGRFRQNLLGKRVDYSGRSVIVVGPQLKLHQCGLPKLMALELFKPFVMKRLVDLNHAQNIKSAKRMVERQRPQVWDVLEEVIAEHPVLLNRAPTLHRLGIQAFEPQLVEGKAIQLHPLVCEAFNADFDGDQMAVHLPLSAEAQAEARILMLSSNNILSPASGKPLAMPRLDMVTGLYYLTTLVEGATGEYQAATKDAPEQGVYSSPAEAIMAMDRGALSVRAKIKVRLTELRPPTDLEAQLFENGWKPGDAWTAETTLGRVMFNELLPKSYPFVNEQMHKKVQARIINDLAERFPMIVVAQTVDKLKDAGFYWATRSGVTVSMADVLVPPQKQEILERHEAEADAIERKYQRGALNHTERNESLVKIWQDATEEVGKALEEFYPADNPIITIVKSGATGNLTQTRTLAGMKGLVTNPKGEFIPRPIKSSFREGLTVLEYFINTHGARKGLADTALRTADSGYLTRRLVDVSQDVIVREHDCETERGINVTLAERGPDGTLIRDAHVETSAFARTLATDAVDANGNVIIERGHDLGDPAIDALLAAGITTVKVRSVLTCTSATGVCAMCYGRSMATGKLVDIGEAVGIVAAQSIGEPGTQLTMRTFHQGGVTGGADIVGGLPRVQELFEARVPRNKAPIADVAGRVRLEESDKFFKITIVPDDGGEEVVYDKLSKRQRLRVITHEDGTEGVLSDGDHVEVGDQLMEGAADPHEVLRVQGPREVQIHLVKEVQEVYRAQGVSIHDKHIEVIVRQMLRRVTIIDSGSTEFLPGSLTERAEFEAENRRVVAEGGEPAAGRPVLMGITKASLATDSWLSAASFQETTRVLTDAAINCRSDKLNGLKENVIIGKLIPAGTGISRYRNIQVQPTEEARAAAYTIPSYEDQYYSPDFGQATGAAVPLDDYGYSDYR</sequence>
<name>RPOC_MYCS2</name>
<organism>
    <name type="scientific">Mycolicibacterium smegmatis (strain ATCC 700084 / mc(2)155)</name>
    <name type="common">Mycobacterium smegmatis</name>
    <dbReference type="NCBI Taxonomy" id="246196"/>
    <lineage>
        <taxon>Bacteria</taxon>
        <taxon>Bacillati</taxon>
        <taxon>Actinomycetota</taxon>
        <taxon>Actinomycetes</taxon>
        <taxon>Mycobacteriales</taxon>
        <taxon>Mycobacteriaceae</taxon>
        <taxon>Mycolicibacterium</taxon>
    </lineage>
</organism>
<proteinExistence type="evidence at protein level"/>
<comment type="function">
    <text evidence="1 2">DNA-dependent RNA polymerase catalyzes the transcription of DNA into RNA using the four ribonucleoside triphosphates as substrates.</text>
</comment>
<comment type="catalytic activity">
    <reaction evidence="1">
        <text>RNA(n) + a ribonucleoside 5'-triphosphate = RNA(n+1) + diphosphate</text>
        <dbReference type="Rhea" id="RHEA:21248"/>
        <dbReference type="Rhea" id="RHEA-COMP:14527"/>
        <dbReference type="Rhea" id="RHEA-COMP:17342"/>
        <dbReference type="ChEBI" id="CHEBI:33019"/>
        <dbReference type="ChEBI" id="CHEBI:61557"/>
        <dbReference type="ChEBI" id="CHEBI:140395"/>
        <dbReference type="EC" id="2.7.7.6"/>
    </reaction>
</comment>
<comment type="cofactor">
    <cofactor evidence="1">
        <name>Mg(2+)</name>
        <dbReference type="ChEBI" id="CHEBI:18420"/>
    </cofactor>
    <text evidence="1">Binds 1 Mg(2+) ion per subunit.</text>
</comment>
<comment type="cofactor">
    <cofactor evidence="1">
        <name>Zn(2+)</name>
        <dbReference type="ChEBI" id="CHEBI:29105"/>
    </cofactor>
    <text evidence="1">Binds 2 Zn(2+) ions per subunit.</text>
</comment>
<comment type="subunit">
    <text evidence="1 2">The RNAP catalytic core consists of 2 alpha, 1 beta, 1 beta' and 1 omega subunit. When a sigma factor is associated with the core the holoenzyme is formed, which can initiate transcription.</text>
</comment>
<comment type="similarity">
    <text evidence="1">Belongs to the RNA polymerase beta' chain family.</text>
</comment>
<gene>
    <name evidence="1" type="primary">rpoC</name>
    <name type="ordered locus">MSMEG_1368</name>
    <name type="ordered locus">MSMEI_1329</name>
</gene>
<evidence type="ECO:0000255" key="1">
    <source>
        <dbReference type="HAMAP-Rule" id="MF_01322"/>
    </source>
</evidence>
<evidence type="ECO:0000269" key="2">
    <source>
    </source>
</evidence>
<evidence type="ECO:0007829" key="3">
    <source>
        <dbReference type="PDB" id="5TW1"/>
    </source>
</evidence>
<evidence type="ECO:0007829" key="4">
    <source>
        <dbReference type="PDB" id="5VI5"/>
    </source>
</evidence>
<evidence type="ECO:0007829" key="5">
    <source>
        <dbReference type="PDB" id="6CCE"/>
    </source>
</evidence>
<evidence type="ECO:0007829" key="6">
    <source>
        <dbReference type="PDB" id="6VVT"/>
    </source>
</evidence>
<evidence type="ECO:0007829" key="7">
    <source>
        <dbReference type="PDB" id="6YXU"/>
    </source>
</evidence>
<evidence type="ECO:0007829" key="8">
    <source>
        <dbReference type="PDB" id="6YYS"/>
    </source>
</evidence>
<evidence type="ECO:0007829" key="9">
    <source>
        <dbReference type="PDB" id="8Q3I"/>
    </source>
</evidence>
<evidence type="ECO:0007829" key="10">
    <source>
        <dbReference type="PDB" id="8QN8"/>
    </source>
</evidence>
<evidence type="ECO:0007829" key="11">
    <source>
        <dbReference type="PDB" id="8QTI"/>
    </source>
</evidence>
<evidence type="ECO:0007829" key="12">
    <source>
        <dbReference type="PDB" id="8R6P"/>
    </source>
</evidence>
<reference key="1">
    <citation type="submission" date="2006-10" db="EMBL/GenBank/DDBJ databases">
        <authorList>
            <person name="Fleischmann R.D."/>
            <person name="Dodson R.J."/>
            <person name="Haft D.H."/>
            <person name="Merkel J.S."/>
            <person name="Nelson W.C."/>
            <person name="Fraser C.M."/>
        </authorList>
    </citation>
    <scope>NUCLEOTIDE SEQUENCE [LARGE SCALE GENOMIC DNA]</scope>
    <source>
        <strain>ATCC 700084 / mc(2)155</strain>
    </source>
</reference>
<reference key="2">
    <citation type="journal article" date="2007" name="Genome Biol.">
        <title>Interrupted coding sequences in Mycobacterium smegmatis: authentic mutations or sequencing errors?</title>
        <authorList>
            <person name="Deshayes C."/>
            <person name="Perrodou E."/>
            <person name="Gallien S."/>
            <person name="Euphrasie D."/>
            <person name="Schaeffer C."/>
            <person name="Van-Dorsselaer A."/>
            <person name="Poch O."/>
            <person name="Lecompte O."/>
            <person name="Reyrat J.-M."/>
        </authorList>
    </citation>
    <scope>NUCLEOTIDE SEQUENCE [LARGE SCALE GENOMIC DNA]</scope>
    <source>
        <strain>ATCC 700084 / mc(2)155</strain>
    </source>
</reference>
<reference key="3">
    <citation type="journal article" date="2009" name="Genome Res.">
        <title>Ortho-proteogenomics: multiple proteomes investigation through orthology and a new MS-based protocol.</title>
        <authorList>
            <person name="Gallien S."/>
            <person name="Perrodou E."/>
            <person name="Carapito C."/>
            <person name="Deshayes C."/>
            <person name="Reyrat J.-M."/>
            <person name="Van Dorsselaer A."/>
            <person name="Poch O."/>
            <person name="Schaeffer C."/>
            <person name="Lecompte O."/>
        </authorList>
    </citation>
    <scope>NUCLEOTIDE SEQUENCE [LARGE SCALE GENOMIC DNA]</scope>
    <scope>IDENTIFICATION BY MASS SPECTROMETRY [LARGE SCALE ANALYSIS]</scope>
    <scope>IDENTIFICATION OF N-TERMINUS</scope>
    <source>
        <strain>ATCC 700084 / mc(2)155</strain>
    </source>
</reference>
<reference key="4">
    <citation type="journal article" date="2010" name="Microbiology">
        <title>Role of an RNA polymerase interacting protein, MsRbpA, from Mycobacterium smegmatis in phenotypic tolerance to rifampicin.</title>
        <authorList>
            <person name="Dey A."/>
            <person name="Verma A.K."/>
            <person name="Chatterji D."/>
        </authorList>
    </citation>
    <scope>FUNCTION</scope>
    <scope>SUBUNIT</scope>
    <source>
        <strain>ATCC 700084 / mc(2)155</strain>
    </source>
</reference>
<dbReference type="EC" id="2.7.7.6" evidence="1"/>
<dbReference type="EMBL" id="CP000480">
    <property type="protein sequence ID" value="ABK71951.1"/>
    <property type="molecule type" value="Genomic_DNA"/>
</dbReference>
<dbReference type="EMBL" id="CP001663">
    <property type="protein sequence ID" value="AFP37802.1"/>
    <property type="molecule type" value="Genomic_DNA"/>
</dbReference>
<dbReference type="RefSeq" id="WP_003892756.1">
    <property type="nucleotide sequence ID" value="NZ_SIJM01000030.1"/>
</dbReference>
<dbReference type="RefSeq" id="YP_885754.1">
    <property type="nucleotide sequence ID" value="NC_008596.1"/>
</dbReference>
<dbReference type="PDB" id="5TW1">
    <property type="method" value="X-ray"/>
    <property type="resolution" value="2.76 A"/>
    <property type="chains" value="D=1-1317"/>
</dbReference>
<dbReference type="PDB" id="5VI5">
    <property type="method" value="X-ray"/>
    <property type="resolution" value="3.20 A"/>
    <property type="chains" value="D=1-1317"/>
</dbReference>
<dbReference type="PDB" id="5VI8">
    <property type="method" value="X-ray"/>
    <property type="resolution" value="2.76 A"/>
    <property type="chains" value="D=1-1317"/>
</dbReference>
<dbReference type="PDB" id="6CCE">
    <property type="method" value="X-ray"/>
    <property type="resolution" value="3.05 A"/>
    <property type="chains" value="D=1-1317"/>
</dbReference>
<dbReference type="PDB" id="6CCV">
    <property type="method" value="X-ray"/>
    <property type="resolution" value="3.05 A"/>
    <property type="chains" value="D=1-1317"/>
</dbReference>
<dbReference type="PDB" id="6DCF">
    <property type="method" value="X-ray"/>
    <property type="resolution" value="3.45 A"/>
    <property type="chains" value="D=1-1317"/>
</dbReference>
<dbReference type="PDB" id="6EYD">
    <property type="method" value="EM"/>
    <property type="resolution" value="4.20 A"/>
    <property type="chains" value="D=2-1317"/>
</dbReference>
<dbReference type="PDB" id="6F6W">
    <property type="method" value="EM"/>
    <property type="resolution" value="3.80 A"/>
    <property type="chains" value="D=2-1317"/>
</dbReference>
<dbReference type="PDB" id="6VVS">
    <property type="method" value="X-ray"/>
    <property type="resolution" value="3.11 A"/>
    <property type="chains" value="D=1-1317"/>
</dbReference>
<dbReference type="PDB" id="6VVT">
    <property type="method" value="X-ray"/>
    <property type="resolution" value="2.90 A"/>
    <property type="chains" value="D=1-1317"/>
</dbReference>
<dbReference type="PDB" id="6VVV">
    <property type="method" value="X-ray"/>
    <property type="resolution" value="3.20 A"/>
    <property type="chains" value="D=1-1317"/>
</dbReference>
<dbReference type="PDB" id="6YXU">
    <property type="method" value="EM"/>
    <property type="resolution" value="3.08 A"/>
    <property type="chains" value="D=1-1317"/>
</dbReference>
<dbReference type="PDB" id="6YYS">
    <property type="method" value="EM"/>
    <property type="resolution" value="3.08 A"/>
    <property type="chains" value="D=1-1317"/>
</dbReference>
<dbReference type="PDB" id="6Z11">
    <property type="method" value="EM"/>
    <property type="resolution" value="3.36 A"/>
    <property type="chains" value="D=1-1317"/>
</dbReference>
<dbReference type="PDB" id="7P5X">
    <property type="method" value="EM"/>
    <property type="resolution" value="3.20 A"/>
    <property type="chains" value="AD=1-1317"/>
</dbReference>
<dbReference type="PDB" id="8Q3I">
    <property type="method" value="EM"/>
    <property type="resolution" value="3.11 A"/>
    <property type="chains" value="D=1-1317"/>
</dbReference>
<dbReference type="PDB" id="8QN8">
    <property type="method" value="EM"/>
    <property type="resolution" value="3.14 A"/>
    <property type="chains" value="D=1-1317"/>
</dbReference>
<dbReference type="PDB" id="8QTI">
    <property type="method" value="EM"/>
    <property type="resolution" value="3.09 A"/>
    <property type="chains" value="D=1-1317"/>
</dbReference>
<dbReference type="PDB" id="8QU6">
    <property type="method" value="EM"/>
    <property type="resolution" value="3.45 A"/>
    <property type="chains" value="D=1-1317"/>
</dbReference>
<dbReference type="PDB" id="8R2M">
    <property type="method" value="EM"/>
    <property type="resolution" value="3.44 A"/>
    <property type="chains" value="D=1-1317"/>
</dbReference>
<dbReference type="PDB" id="8R3M">
    <property type="method" value="EM"/>
    <property type="resolution" value="3.49 A"/>
    <property type="chains" value="D=1-1317"/>
</dbReference>
<dbReference type="PDB" id="8R6P">
    <property type="method" value="EM"/>
    <property type="resolution" value="3.16 A"/>
    <property type="chains" value="D=1-1317"/>
</dbReference>
<dbReference type="PDB" id="8R6R">
    <property type="method" value="EM"/>
    <property type="resolution" value="3.89 A"/>
    <property type="chains" value="D=1-1317"/>
</dbReference>
<dbReference type="PDB" id="9FNE">
    <property type="method" value="EM"/>
    <property type="resolution" value="4.00 A"/>
    <property type="chains" value="D=1-1317"/>
</dbReference>
<dbReference type="PDBsum" id="5TW1"/>
<dbReference type="PDBsum" id="5VI5"/>
<dbReference type="PDBsum" id="5VI8"/>
<dbReference type="PDBsum" id="6CCE"/>
<dbReference type="PDBsum" id="6CCV"/>
<dbReference type="PDBsum" id="6DCF"/>
<dbReference type="PDBsum" id="6EYD"/>
<dbReference type="PDBsum" id="6F6W"/>
<dbReference type="PDBsum" id="6VVS"/>
<dbReference type="PDBsum" id="6VVT"/>
<dbReference type="PDBsum" id="6VVV"/>
<dbReference type="PDBsum" id="6YXU"/>
<dbReference type="PDBsum" id="6YYS"/>
<dbReference type="PDBsum" id="6Z11"/>
<dbReference type="PDBsum" id="7P5X"/>
<dbReference type="PDBsum" id="8Q3I"/>
<dbReference type="PDBsum" id="8QN8"/>
<dbReference type="PDBsum" id="8QTI"/>
<dbReference type="PDBsum" id="8QU6"/>
<dbReference type="PDBsum" id="8R2M"/>
<dbReference type="PDBsum" id="8R3M"/>
<dbReference type="PDBsum" id="8R6P"/>
<dbReference type="PDBsum" id="8R6R"/>
<dbReference type="PDBsum" id="9FNE"/>
<dbReference type="EMDB" id="EMD-10996"/>
<dbReference type="EMDB" id="EMD-11004"/>
<dbReference type="EMDB" id="EMD-11026"/>
<dbReference type="EMDB" id="EMD-13205"/>
<dbReference type="EMDB" id="EMD-18128"/>
<dbReference type="EMDB" id="EMD-18511"/>
<dbReference type="EMDB" id="EMD-18650"/>
<dbReference type="EMDB" id="EMD-18656"/>
<dbReference type="EMDB" id="EMD-18851"/>
<dbReference type="EMDB" id="EMD-18873"/>
<dbReference type="EMDB" id="EMD-18956"/>
<dbReference type="EMDB" id="EMD-18959"/>
<dbReference type="EMDB" id="EMD-3983"/>
<dbReference type="EMDB" id="EMD-4192"/>
<dbReference type="EMDB" id="EMD-50589"/>
<dbReference type="EMDB" id="EMD-50591"/>
<dbReference type="SMR" id="A0QS66"/>
<dbReference type="IntAct" id="A0QS66">
    <property type="interactions" value="2"/>
</dbReference>
<dbReference type="STRING" id="246196.MSMEG_1368"/>
<dbReference type="PaxDb" id="246196-MSMEI_1329"/>
<dbReference type="KEGG" id="msb:LJ00_06820"/>
<dbReference type="KEGG" id="msg:MSMEI_1329"/>
<dbReference type="KEGG" id="msm:MSMEG_1368"/>
<dbReference type="PATRIC" id="fig|246196.19.peg.1352"/>
<dbReference type="eggNOG" id="COG0086">
    <property type="taxonomic scope" value="Bacteria"/>
</dbReference>
<dbReference type="OrthoDB" id="9815296at2"/>
<dbReference type="BRENDA" id="2.7.7.6">
    <property type="organism ID" value="3512"/>
</dbReference>
<dbReference type="Proteomes" id="UP000000757">
    <property type="component" value="Chromosome"/>
</dbReference>
<dbReference type="Proteomes" id="UP000006158">
    <property type="component" value="Chromosome"/>
</dbReference>
<dbReference type="GO" id="GO:0000428">
    <property type="term" value="C:DNA-directed RNA polymerase complex"/>
    <property type="evidence" value="ECO:0007669"/>
    <property type="project" value="UniProtKB-KW"/>
</dbReference>
<dbReference type="GO" id="GO:0003677">
    <property type="term" value="F:DNA binding"/>
    <property type="evidence" value="ECO:0007669"/>
    <property type="project" value="UniProtKB-UniRule"/>
</dbReference>
<dbReference type="GO" id="GO:0003899">
    <property type="term" value="F:DNA-directed RNA polymerase activity"/>
    <property type="evidence" value="ECO:0007669"/>
    <property type="project" value="UniProtKB-UniRule"/>
</dbReference>
<dbReference type="GO" id="GO:0000287">
    <property type="term" value="F:magnesium ion binding"/>
    <property type="evidence" value="ECO:0007669"/>
    <property type="project" value="UniProtKB-UniRule"/>
</dbReference>
<dbReference type="GO" id="GO:0008270">
    <property type="term" value="F:zinc ion binding"/>
    <property type="evidence" value="ECO:0007669"/>
    <property type="project" value="UniProtKB-UniRule"/>
</dbReference>
<dbReference type="GO" id="GO:0006351">
    <property type="term" value="P:DNA-templated transcription"/>
    <property type="evidence" value="ECO:0007669"/>
    <property type="project" value="UniProtKB-UniRule"/>
</dbReference>
<dbReference type="CDD" id="cd02655">
    <property type="entry name" value="RNAP_beta'_C"/>
    <property type="match status" value="1"/>
</dbReference>
<dbReference type="CDD" id="cd01609">
    <property type="entry name" value="RNAP_beta'_N"/>
    <property type="match status" value="1"/>
</dbReference>
<dbReference type="FunFam" id="1.10.150.390:FF:000002">
    <property type="entry name" value="DNA-directed RNA polymerase subunit beta"/>
    <property type="match status" value="1"/>
</dbReference>
<dbReference type="FunFam" id="1.10.40.90:FF:000001">
    <property type="entry name" value="DNA-directed RNA polymerase subunit beta"/>
    <property type="match status" value="1"/>
</dbReference>
<dbReference type="FunFam" id="4.10.860.120:FF:000001">
    <property type="entry name" value="DNA-directed RNA polymerase subunit beta"/>
    <property type="match status" value="1"/>
</dbReference>
<dbReference type="Gene3D" id="1.10.132.30">
    <property type="match status" value="1"/>
</dbReference>
<dbReference type="Gene3D" id="1.10.150.390">
    <property type="match status" value="1"/>
</dbReference>
<dbReference type="Gene3D" id="1.10.1790.20">
    <property type="match status" value="1"/>
</dbReference>
<dbReference type="Gene3D" id="1.10.40.90">
    <property type="match status" value="1"/>
</dbReference>
<dbReference type="Gene3D" id="2.40.40.20">
    <property type="match status" value="1"/>
</dbReference>
<dbReference type="Gene3D" id="2.40.50.100">
    <property type="match status" value="1"/>
</dbReference>
<dbReference type="Gene3D" id="4.10.860.120">
    <property type="entry name" value="RNA polymerase II, clamp domain"/>
    <property type="match status" value="1"/>
</dbReference>
<dbReference type="Gene3D" id="1.10.274.100">
    <property type="entry name" value="RNA polymerase Rpb1, domain 3"/>
    <property type="match status" value="1"/>
</dbReference>
<dbReference type="HAMAP" id="MF_01322">
    <property type="entry name" value="RNApol_bact_RpoC"/>
    <property type="match status" value="1"/>
</dbReference>
<dbReference type="InterPro" id="IPR045867">
    <property type="entry name" value="DNA-dir_RpoC_beta_prime"/>
</dbReference>
<dbReference type="InterPro" id="IPR012754">
    <property type="entry name" value="DNA-dir_RpoC_beta_prime_bact"/>
</dbReference>
<dbReference type="InterPro" id="IPR000722">
    <property type="entry name" value="RNA_pol_asu"/>
</dbReference>
<dbReference type="InterPro" id="IPR006592">
    <property type="entry name" value="RNA_pol_N"/>
</dbReference>
<dbReference type="InterPro" id="IPR007080">
    <property type="entry name" value="RNA_pol_Rpb1_1"/>
</dbReference>
<dbReference type="InterPro" id="IPR007066">
    <property type="entry name" value="RNA_pol_Rpb1_3"/>
</dbReference>
<dbReference type="InterPro" id="IPR042102">
    <property type="entry name" value="RNA_pol_Rpb1_3_sf"/>
</dbReference>
<dbReference type="InterPro" id="IPR007083">
    <property type="entry name" value="RNA_pol_Rpb1_4"/>
</dbReference>
<dbReference type="InterPro" id="IPR007081">
    <property type="entry name" value="RNA_pol_Rpb1_5"/>
</dbReference>
<dbReference type="InterPro" id="IPR044893">
    <property type="entry name" value="RNA_pol_Rpb1_clamp_domain"/>
</dbReference>
<dbReference type="InterPro" id="IPR038120">
    <property type="entry name" value="Rpb1_funnel_sf"/>
</dbReference>
<dbReference type="NCBIfam" id="NF011498">
    <property type="entry name" value="PRK14906.1"/>
    <property type="match status" value="1"/>
</dbReference>
<dbReference type="NCBIfam" id="TIGR02386">
    <property type="entry name" value="rpoC_TIGR"/>
    <property type="match status" value="1"/>
</dbReference>
<dbReference type="PANTHER" id="PTHR19376">
    <property type="entry name" value="DNA-DIRECTED RNA POLYMERASE"/>
    <property type="match status" value="1"/>
</dbReference>
<dbReference type="PANTHER" id="PTHR19376:SF54">
    <property type="entry name" value="DNA-DIRECTED RNA POLYMERASE SUBUNIT BETA"/>
    <property type="match status" value="1"/>
</dbReference>
<dbReference type="Pfam" id="PF04997">
    <property type="entry name" value="RNA_pol_Rpb1_1"/>
    <property type="match status" value="1"/>
</dbReference>
<dbReference type="Pfam" id="PF00623">
    <property type="entry name" value="RNA_pol_Rpb1_2"/>
    <property type="match status" value="1"/>
</dbReference>
<dbReference type="Pfam" id="PF04983">
    <property type="entry name" value="RNA_pol_Rpb1_3"/>
    <property type="match status" value="1"/>
</dbReference>
<dbReference type="Pfam" id="PF05000">
    <property type="entry name" value="RNA_pol_Rpb1_4"/>
    <property type="match status" value="1"/>
</dbReference>
<dbReference type="Pfam" id="PF04998">
    <property type="entry name" value="RNA_pol_Rpb1_5"/>
    <property type="match status" value="1"/>
</dbReference>
<dbReference type="SMART" id="SM00663">
    <property type="entry name" value="RPOLA_N"/>
    <property type="match status" value="1"/>
</dbReference>
<dbReference type="SUPFAM" id="SSF64484">
    <property type="entry name" value="beta and beta-prime subunits of DNA dependent RNA-polymerase"/>
    <property type="match status" value="1"/>
</dbReference>
<keyword id="KW-0002">3D-structure</keyword>
<keyword id="KW-0240">DNA-directed RNA polymerase</keyword>
<keyword id="KW-0460">Magnesium</keyword>
<keyword id="KW-0479">Metal-binding</keyword>
<keyword id="KW-0548">Nucleotidyltransferase</keyword>
<keyword id="KW-1185">Reference proteome</keyword>
<keyword id="KW-0804">Transcription</keyword>
<keyword id="KW-0808">Transferase</keyword>
<keyword id="KW-0862">Zinc</keyword>
<protein>
    <recommendedName>
        <fullName evidence="1">DNA-directed RNA polymerase subunit beta'</fullName>
        <shortName evidence="1">RNAP subunit beta'</shortName>
        <ecNumber evidence="1">2.7.7.6</ecNumber>
    </recommendedName>
    <alternativeName>
        <fullName evidence="1">RNA polymerase subunit beta'</fullName>
    </alternativeName>
    <alternativeName>
        <fullName evidence="1">Transcriptase subunit beta'</fullName>
    </alternativeName>
</protein>
<accession>A0QS66</accession>
<accession>I7FY06</accession>
<feature type="chain" id="PRO_0000308855" description="DNA-directed RNA polymerase subunit beta'">
    <location>
        <begin position="1"/>
        <end position="1317"/>
    </location>
</feature>
<feature type="binding site" evidence="1">
    <location>
        <position position="60"/>
    </location>
    <ligand>
        <name>Zn(2+)</name>
        <dbReference type="ChEBI" id="CHEBI:29105"/>
        <label>1</label>
    </ligand>
</feature>
<feature type="binding site" evidence="1">
    <location>
        <position position="62"/>
    </location>
    <ligand>
        <name>Zn(2+)</name>
        <dbReference type="ChEBI" id="CHEBI:29105"/>
        <label>1</label>
    </ligand>
</feature>
<feature type="binding site" evidence="1">
    <location>
        <position position="75"/>
    </location>
    <ligand>
        <name>Zn(2+)</name>
        <dbReference type="ChEBI" id="CHEBI:29105"/>
        <label>1</label>
    </ligand>
</feature>
<feature type="binding site" evidence="1">
    <location>
        <position position="78"/>
    </location>
    <ligand>
        <name>Zn(2+)</name>
        <dbReference type="ChEBI" id="CHEBI:29105"/>
        <label>1</label>
    </ligand>
</feature>
<feature type="binding site" evidence="1">
    <location>
        <position position="535"/>
    </location>
    <ligand>
        <name>Mg(2+)</name>
        <dbReference type="ChEBI" id="CHEBI:18420"/>
    </ligand>
</feature>
<feature type="binding site" evidence="1">
    <location>
        <position position="537"/>
    </location>
    <ligand>
        <name>Mg(2+)</name>
        <dbReference type="ChEBI" id="CHEBI:18420"/>
    </ligand>
</feature>
<feature type="binding site" evidence="1">
    <location>
        <position position="539"/>
    </location>
    <ligand>
        <name>Mg(2+)</name>
        <dbReference type="ChEBI" id="CHEBI:18420"/>
    </ligand>
</feature>
<feature type="binding site" evidence="1">
    <location>
        <position position="890"/>
    </location>
    <ligand>
        <name>Zn(2+)</name>
        <dbReference type="ChEBI" id="CHEBI:29105"/>
        <label>2</label>
    </ligand>
</feature>
<feature type="binding site" evidence="1">
    <location>
        <position position="967"/>
    </location>
    <ligand>
        <name>Zn(2+)</name>
        <dbReference type="ChEBI" id="CHEBI:29105"/>
        <label>2</label>
    </ligand>
</feature>
<feature type="binding site" evidence="1">
    <location>
        <position position="974"/>
    </location>
    <ligand>
        <name>Zn(2+)</name>
        <dbReference type="ChEBI" id="CHEBI:29105"/>
        <label>2</label>
    </ligand>
</feature>
<feature type="binding site" evidence="1">
    <location>
        <position position="977"/>
    </location>
    <ligand>
        <name>Zn(2+)</name>
        <dbReference type="ChEBI" id="CHEBI:29105"/>
        <label>2</label>
    </ligand>
</feature>
<feature type="helix" evidence="9">
    <location>
        <begin position="4"/>
        <end position="6"/>
    </location>
</feature>
<feature type="strand" evidence="5">
    <location>
        <begin position="9"/>
        <end position="14"/>
    </location>
</feature>
<feature type="helix" evidence="3">
    <location>
        <begin position="17"/>
        <end position="23"/>
    </location>
</feature>
<feature type="strand" evidence="3">
    <location>
        <begin position="24"/>
        <end position="27"/>
    </location>
</feature>
<feature type="turn" evidence="3">
    <location>
        <begin position="36"/>
        <end position="38"/>
    </location>
</feature>
<feature type="strand" evidence="8">
    <location>
        <begin position="43"/>
        <end position="47"/>
    </location>
</feature>
<feature type="turn" evidence="3">
    <location>
        <begin position="49"/>
        <end position="52"/>
    </location>
</feature>
<feature type="strand" evidence="8">
    <location>
        <begin position="55"/>
        <end position="58"/>
    </location>
</feature>
<feature type="strand" evidence="6">
    <location>
        <begin position="61"/>
        <end position="64"/>
    </location>
</feature>
<feature type="helix" evidence="11">
    <location>
        <begin position="68"/>
        <end position="70"/>
    </location>
</feature>
<feature type="turn" evidence="3">
    <location>
        <begin position="76"/>
        <end position="78"/>
    </location>
</feature>
<feature type="helix" evidence="3">
    <location>
        <begin position="87"/>
        <end position="90"/>
    </location>
</feature>
<feature type="strand" evidence="3">
    <location>
        <begin position="92"/>
        <end position="102"/>
    </location>
</feature>
<feature type="helix" evidence="3">
    <location>
        <begin position="104"/>
        <end position="108"/>
    </location>
</feature>
<feature type="strand" evidence="3">
    <location>
        <begin position="109"/>
        <end position="111"/>
    </location>
</feature>
<feature type="helix" evidence="3">
    <location>
        <begin position="113"/>
        <end position="118"/>
    </location>
</feature>
<feature type="helix" evidence="3">
    <location>
        <begin position="122"/>
        <end position="129"/>
    </location>
</feature>
<feature type="strand" evidence="3">
    <location>
        <begin position="132"/>
        <end position="139"/>
    </location>
</feature>
<feature type="helix" evidence="3">
    <location>
        <begin position="141"/>
        <end position="146"/>
    </location>
</feature>
<feature type="helix" evidence="3">
    <location>
        <begin position="148"/>
        <end position="186"/>
    </location>
</feature>
<feature type="helix" evidence="3">
    <location>
        <begin position="191"/>
        <end position="228"/>
    </location>
</feature>
<feature type="helix" evidence="3">
    <location>
        <begin position="239"/>
        <end position="246"/>
    </location>
</feature>
<feature type="helix" evidence="3">
    <location>
        <begin position="249"/>
        <end position="251"/>
    </location>
</feature>
<feature type="strand" evidence="3">
    <location>
        <begin position="252"/>
        <end position="255"/>
    </location>
</feature>
<feature type="helix" evidence="3">
    <location>
        <begin position="257"/>
        <end position="266"/>
    </location>
</feature>
<feature type="helix" evidence="3">
    <location>
        <begin position="270"/>
        <end position="283"/>
    </location>
</feature>
<feature type="helix" evidence="3">
    <location>
        <begin position="287"/>
        <end position="304"/>
    </location>
</feature>
<feature type="strand" evidence="5">
    <location>
        <begin position="305"/>
        <end position="307"/>
    </location>
</feature>
<feature type="helix" evidence="3">
    <location>
        <begin position="309"/>
        <end position="312"/>
    </location>
</feature>
<feature type="strand" evidence="3">
    <location>
        <begin position="313"/>
        <end position="319"/>
    </location>
</feature>
<feature type="helix" evidence="3">
    <location>
        <begin position="322"/>
        <end position="324"/>
    </location>
</feature>
<feature type="strand" evidence="3">
    <location>
        <begin position="327"/>
        <end position="329"/>
    </location>
</feature>
<feature type="strand" evidence="5">
    <location>
        <begin position="331"/>
        <end position="333"/>
    </location>
</feature>
<feature type="strand" evidence="3">
    <location>
        <begin position="335"/>
        <end position="337"/>
    </location>
</feature>
<feature type="helix" evidence="3">
    <location>
        <begin position="339"/>
        <end position="360"/>
    </location>
</feature>
<feature type="helix" evidence="3">
    <location>
        <begin position="364"/>
        <end position="382"/>
    </location>
</feature>
<feature type="strand" evidence="3">
    <location>
        <begin position="383"/>
        <end position="389"/>
    </location>
</feature>
<feature type="helix" evidence="3">
    <location>
        <begin position="394"/>
        <end position="396"/>
    </location>
</feature>
<feature type="helix" evidence="3">
    <location>
        <begin position="402"/>
        <end position="406"/>
    </location>
</feature>
<feature type="strand" evidence="6">
    <location>
        <begin position="408"/>
        <end position="411"/>
    </location>
</feature>
<feature type="helix" evidence="3">
    <location>
        <begin position="412"/>
        <end position="416"/>
    </location>
</feature>
<feature type="strand" evidence="3">
    <location>
        <begin position="418"/>
        <end position="432"/>
    </location>
</feature>
<feature type="strand" evidence="12">
    <location>
        <begin position="434"/>
        <end position="436"/>
    </location>
</feature>
<feature type="strand" evidence="3">
    <location>
        <begin position="440"/>
        <end position="444"/>
    </location>
</feature>
<feature type="helix" evidence="3">
    <location>
        <begin position="445"/>
        <end position="462"/>
    </location>
</feature>
<feature type="turn" evidence="6">
    <location>
        <begin position="463"/>
        <end position="465"/>
    </location>
</feature>
<feature type="strand" evidence="6">
    <location>
        <begin position="466"/>
        <end position="468"/>
    </location>
</feature>
<feature type="helix" evidence="3">
    <location>
        <begin position="469"/>
        <end position="477"/>
    </location>
</feature>
<feature type="helix" evidence="3">
    <location>
        <begin position="483"/>
        <end position="491"/>
    </location>
</feature>
<feature type="strand" evidence="3">
    <location>
        <begin position="496"/>
        <end position="499"/>
    </location>
</feature>
<feature type="helix" evidence="3">
    <location>
        <begin position="506"/>
        <end position="508"/>
    </location>
</feature>
<feature type="strand" evidence="3">
    <location>
        <begin position="509"/>
        <end position="524"/>
    </location>
</feature>
<feature type="turn" evidence="6">
    <location>
        <begin position="526"/>
        <end position="528"/>
    </location>
</feature>
<feature type="helix" evidence="3">
    <location>
        <begin position="529"/>
        <end position="532"/>
    </location>
</feature>
<feature type="turn" evidence="3">
    <location>
        <begin position="536"/>
        <end position="538"/>
    </location>
</feature>
<feature type="strand" evidence="3">
    <location>
        <begin position="540"/>
        <end position="544"/>
    </location>
</feature>
<feature type="helix" evidence="3">
    <location>
        <begin position="549"/>
        <end position="557"/>
    </location>
</feature>
<feature type="helix" evidence="3">
    <location>
        <begin position="561"/>
        <end position="563"/>
    </location>
</feature>
<feature type="turn" evidence="3">
    <location>
        <begin position="568"/>
        <end position="570"/>
    </location>
</feature>
<feature type="strand" evidence="3">
    <location>
        <begin position="573"/>
        <end position="576"/>
    </location>
</feature>
<feature type="helix" evidence="3">
    <location>
        <begin position="580"/>
        <end position="589"/>
    </location>
</feature>
<feature type="strand" evidence="9">
    <location>
        <begin position="592"/>
        <end position="594"/>
    </location>
</feature>
<feature type="strand" evidence="6">
    <location>
        <begin position="604"/>
        <end position="606"/>
    </location>
</feature>
<feature type="strand" evidence="3">
    <location>
        <begin position="610"/>
        <end position="613"/>
    </location>
</feature>
<feature type="helix" evidence="3">
    <location>
        <begin position="615"/>
        <end position="623"/>
    </location>
</feature>
<feature type="turn" evidence="3">
    <location>
        <begin position="624"/>
        <end position="626"/>
    </location>
</feature>
<feature type="strand" evidence="3">
    <location>
        <begin position="634"/>
        <end position="641"/>
    </location>
</feature>
<feature type="helix" evidence="3">
    <location>
        <begin position="645"/>
        <end position="650"/>
    </location>
</feature>
<feature type="strand" evidence="3">
    <location>
        <begin position="652"/>
        <end position="654"/>
    </location>
</feature>
<feature type="strand" evidence="3">
    <location>
        <begin position="661"/>
        <end position="664"/>
    </location>
</feature>
<feature type="helix" evidence="3">
    <location>
        <begin position="667"/>
        <end position="673"/>
    </location>
</feature>
<feature type="helix" evidence="3">
    <location>
        <begin position="689"/>
        <end position="702"/>
    </location>
</feature>
<feature type="helix" evidence="3">
    <location>
        <begin position="705"/>
        <end position="725"/>
    </location>
</feature>
<feature type="turn" evidence="3">
    <location>
        <begin position="732"/>
        <end position="734"/>
    </location>
</feature>
<feature type="helix" evidence="3">
    <location>
        <begin position="741"/>
        <end position="760"/>
    </location>
</feature>
<feature type="strand" evidence="7">
    <location>
        <begin position="762"/>
        <end position="764"/>
    </location>
</feature>
<feature type="helix" evidence="3">
    <location>
        <begin position="766"/>
        <end position="791"/>
    </location>
</feature>
<feature type="strand" evidence="4">
    <location>
        <begin position="794"/>
        <end position="796"/>
    </location>
</feature>
<feature type="helix" evidence="3">
    <location>
        <begin position="797"/>
        <end position="803"/>
    </location>
</feature>
<feature type="strand" evidence="4">
    <location>
        <begin position="804"/>
        <end position="807"/>
    </location>
</feature>
<feature type="helix" evidence="3">
    <location>
        <begin position="810"/>
        <end position="816"/>
    </location>
</feature>
<feature type="strand" evidence="3">
    <location>
        <begin position="828"/>
        <end position="830"/>
    </location>
</feature>
<feature type="turn" evidence="3">
    <location>
        <begin position="839"/>
        <end position="841"/>
    </location>
</feature>
<feature type="helix" evidence="3">
    <location>
        <begin position="845"/>
        <end position="880"/>
    </location>
</feature>
<feature type="strand" evidence="3">
    <location>
        <begin position="885"/>
        <end position="888"/>
    </location>
</feature>
<feature type="strand" evidence="3">
    <location>
        <begin position="896"/>
        <end position="898"/>
    </location>
</feature>
<feature type="strand" evidence="10">
    <location>
        <begin position="901"/>
        <end position="903"/>
    </location>
</feature>
<feature type="strand" evidence="7">
    <location>
        <begin position="904"/>
        <end position="908"/>
    </location>
</feature>
<feature type="strand" evidence="10">
    <location>
        <begin position="909"/>
        <end position="911"/>
    </location>
</feature>
<feature type="helix" evidence="7">
    <location>
        <begin position="913"/>
        <end position="915"/>
    </location>
</feature>
<feature type="turn" evidence="3">
    <location>
        <begin position="916"/>
        <end position="921"/>
    </location>
</feature>
<feature type="strand" evidence="3">
    <location>
        <begin position="924"/>
        <end position="926"/>
    </location>
</feature>
<feature type="strand" evidence="5">
    <location>
        <begin position="931"/>
        <end position="933"/>
    </location>
</feature>
<feature type="strand" evidence="5">
    <location>
        <begin position="935"/>
        <end position="937"/>
    </location>
</feature>
<feature type="strand" evidence="7">
    <location>
        <begin position="942"/>
        <end position="944"/>
    </location>
</feature>
<feature type="helix" evidence="3">
    <location>
        <begin position="945"/>
        <end position="954"/>
    </location>
</feature>
<feature type="strand" evidence="3">
    <location>
        <begin position="959"/>
        <end position="961"/>
    </location>
</feature>
<feature type="turn" evidence="3">
    <location>
        <begin position="964"/>
        <end position="966"/>
    </location>
</feature>
<feature type="strand" evidence="3">
    <location>
        <begin position="970"/>
        <end position="974"/>
    </location>
</feature>
<feature type="helix" evidence="3">
    <location>
        <begin position="975"/>
        <end position="978"/>
    </location>
</feature>
<feature type="turn" evidence="3">
    <location>
        <begin position="982"/>
        <end position="984"/>
    </location>
</feature>
<feature type="strand" evidence="3">
    <location>
        <begin position="985"/>
        <end position="987"/>
    </location>
</feature>
<feature type="helix" evidence="3">
    <location>
        <begin position="994"/>
        <end position="1003"/>
    </location>
</feature>
<feature type="helix" evidence="3">
    <location>
        <begin position="1004"/>
        <end position="1008"/>
    </location>
</feature>
<feature type="strand" evidence="10">
    <location>
        <begin position="1016"/>
        <end position="1019"/>
    </location>
</feature>
<feature type="helix" evidence="8">
    <location>
        <begin position="1021"/>
        <end position="1023"/>
    </location>
</feature>
<feature type="helix" evidence="3">
    <location>
        <begin position="1029"/>
        <end position="1036"/>
    </location>
</feature>
<feature type="strand" evidence="3">
    <location>
        <begin position="1042"/>
        <end position="1045"/>
    </location>
</feature>
<feature type="strand" evidence="3">
    <location>
        <begin position="1052"/>
        <end position="1058"/>
    </location>
</feature>
<feature type="strand" evidence="3">
    <location>
        <begin position="1063"/>
        <end position="1069"/>
    </location>
</feature>
<feature type="strand" evidence="7">
    <location>
        <begin position="1070"/>
        <end position="1073"/>
    </location>
</feature>
<feature type="strand" evidence="3">
    <location>
        <begin position="1076"/>
        <end position="1078"/>
    </location>
</feature>
<feature type="helix" evidence="3">
    <location>
        <begin position="1083"/>
        <end position="1085"/>
    </location>
</feature>
<feature type="strand" evidence="8">
    <location>
        <begin position="1093"/>
        <end position="1095"/>
    </location>
</feature>
<feature type="strand" evidence="3">
    <location>
        <begin position="1113"/>
        <end position="1117"/>
    </location>
</feature>
<feature type="helix" evidence="3">
    <location>
        <begin position="1119"/>
        <end position="1126"/>
    </location>
</feature>
<feature type="helix" evidence="3">
    <location>
        <begin position="1128"/>
        <end position="1145"/>
    </location>
</feature>
<feature type="helix" evidence="3">
    <location>
        <begin position="1152"/>
        <end position="1162"/>
    </location>
</feature>
<feature type="strand" evidence="3">
    <location>
        <begin position="1163"/>
        <end position="1169"/>
    </location>
</feature>
<feature type="strand" evidence="3">
    <location>
        <begin position="1172"/>
        <end position="1175"/>
    </location>
</feature>
<feature type="strand" evidence="3">
    <location>
        <begin position="1181"/>
        <end position="1183"/>
    </location>
</feature>
<feature type="helix" evidence="3">
    <location>
        <begin position="1184"/>
        <end position="1192"/>
    </location>
</feature>
<feature type="turn" evidence="7">
    <location>
        <begin position="1196"/>
        <end position="1199"/>
    </location>
</feature>
<feature type="strand" evidence="3">
    <location>
        <begin position="1204"/>
        <end position="1207"/>
    </location>
</feature>
<feature type="helix" evidence="3">
    <location>
        <begin position="1211"/>
        <end position="1216"/>
    </location>
</feature>
<feature type="helix" evidence="3">
    <location>
        <begin position="1221"/>
        <end position="1227"/>
    </location>
</feature>
<feature type="helix" evidence="3">
    <location>
        <begin position="1230"/>
        <end position="1240"/>
    </location>
</feature>
<feature type="strand" evidence="11">
    <location>
        <begin position="1243"/>
        <end position="1246"/>
    </location>
</feature>
<feature type="helix" evidence="3">
    <location>
        <begin position="1249"/>
        <end position="1255"/>
    </location>
</feature>
<feature type="helix" evidence="3">
    <location>
        <begin position="1262"/>
        <end position="1264"/>
    </location>
</feature>
<feature type="helix" evidence="3">
    <location>
        <begin position="1266"/>
        <end position="1269"/>
    </location>
</feature>
<feature type="strand" evidence="3">
    <location>
        <begin position="1272"/>
        <end position="1275"/>
    </location>
</feature>
<feature type="helix" evidence="3">
    <location>
        <begin position="1277"/>
        <end position="1282"/>
    </location>
</feature>